<sequence>MSFCVLIPARLASTRLPRKVLLDVGGIPMIEQVRRRALESGAAQVVVAADHPEVVDCIRSYGGEALLTAAEHVCGTERLAEAARLLGLADDAIIVNLQGDEPGMTPALLHATAQLLLDHPQRQMATAAVPITHWDELADPHAVKLVLDAEGCARYFSRAPIPWDRSHFPLSSGQTLPQTPGIWWRHLGLYAYRNAFLQDYAAWSASPLEVIESLEQMRALERGVQIAVYCAAEAPAAGVDTAADLDRVRDLFP</sequence>
<evidence type="ECO:0000255" key="1">
    <source>
        <dbReference type="HAMAP-Rule" id="MF_00057"/>
    </source>
</evidence>
<name>KDSB_ACIF2</name>
<accession>B7J514</accession>
<protein>
    <recommendedName>
        <fullName evidence="1">3-deoxy-manno-octulosonate cytidylyltransferase</fullName>
        <ecNumber evidence="1">2.7.7.38</ecNumber>
    </recommendedName>
    <alternativeName>
        <fullName evidence="1">CMP-2-keto-3-deoxyoctulosonic acid synthase</fullName>
        <shortName evidence="1">CKS</shortName>
        <shortName evidence="1">CMP-KDO synthase</shortName>
    </alternativeName>
</protein>
<gene>
    <name evidence="1" type="primary">kdsB</name>
    <name type="ordered locus">AFE_0491</name>
</gene>
<dbReference type="EC" id="2.7.7.38" evidence="1"/>
<dbReference type="EMBL" id="CP001219">
    <property type="protein sequence ID" value="ACK79477.1"/>
    <property type="molecule type" value="Genomic_DNA"/>
</dbReference>
<dbReference type="RefSeq" id="WP_009566884.1">
    <property type="nucleotide sequence ID" value="NC_011761.1"/>
</dbReference>
<dbReference type="SMR" id="B7J514"/>
<dbReference type="STRING" id="243159.AFE_0491"/>
<dbReference type="PaxDb" id="243159-AFE_0491"/>
<dbReference type="GeneID" id="65279861"/>
<dbReference type="KEGG" id="afr:AFE_0491"/>
<dbReference type="eggNOG" id="COG1212">
    <property type="taxonomic scope" value="Bacteria"/>
</dbReference>
<dbReference type="HOGENOM" id="CLU_065038_1_0_6"/>
<dbReference type="UniPathway" id="UPA00030"/>
<dbReference type="UniPathway" id="UPA00358">
    <property type="reaction ID" value="UER00476"/>
</dbReference>
<dbReference type="Proteomes" id="UP000001362">
    <property type="component" value="Chromosome"/>
</dbReference>
<dbReference type="GO" id="GO:0005829">
    <property type="term" value="C:cytosol"/>
    <property type="evidence" value="ECO:0007669"/>
    <property type="project" value="TreeGrafter"/>
</dbReference>
<dbReference type="GO" id="GO:0008690">
    <property type="term" value="F:3-deoxy-manno-octulosonate cytidylyltransferase activity"/>
    <property type="evidence" value="ECO:0007669"/>
    <property type="project" value="UniProtKB-UniRule"/>
</dbReference>
<dbReference type="GO" id="GO:0033468">
    <property type="term" value="P:CMP-keto-3-deoxy-D-manno-octulosonic acid biosynthetic process"/>
    <property type="evidence" value="ECO:0007669"/>
    <property type="project" value="UniProtKB-UniRule"/>
</dbReference>
<dbReference type="GO" id="GO:0009103">
    <property type="term" value="P:lipopolysaccharide biosynthetic process"/>
    <property type="evidence" value="ECO:0007669"/>
    <property type="project" value="UniProtKB-UniRule"/>
</dbReference>
<dbReference type="CDD" id="cd02517">
    <property type="entry name" value="CMP-KDO-Synthetase"/>
    <property type="match status" value="1"/>
</dbReference>
<dbReference type="FunFam" id="3.90.550.10:FF:000011">
    <property type="entry name" value="3-deoxy-manno-octulosonate cytidylyltransferase"/>
    <property type="match status" value="1"/>
</dbReference>
<dbReference type="Gene3D" id="3.90.550.10">
    <property type="entry name" value="Spore Coat Polysaccharide Biosynthesis Protein SpsA, Chain A"/>
    <property type="match status" value="1"/>
</dbReference>
<dbReference type="HAMAP" id="MF_00057">
    <property type="entry name" value="KdsB"/>
    <property type="match status" value="1"/>
</dbReference>
<dbReference type="InterPro" id="IPR003329">
    <property type="entry name" value="Cytidylyl_trans"/>
</dbReference>
<dbReference type="InterPro" id="IPR004528">
    <property type="entry name" value="KdsB"/>
</dbReference>
<dbReference type="InterPro" id="IPR029044">
    <property type="entry name" value="Nucleotide-diphossugar_trans"/>
</dbReference>
<dbReference type="NCBIfam" id="TIGR00466">
    <property type="entry name" value="kdsB"/>
    <property type="match status" value="1"/>
</dbReference>
<dbReference type="NCBIfam" id="NF003952">
    <property type="entry name" value="PRK05450.1-5"/>
    <property type="match status" value="1"/>
</dbReference>
<dbReference type="PANTHER" id="PTHR42866">
    <property type="entry name" value="3-DEOXY-MANNO-OCTULOSONATE CYTIDYLYLTRANSFERASE"/>
    <property type="match status" value="1"/>
</dbReference>
<dbReference type="PANTHER" id="PTHR42866:SF2">
    <property type="entry name" value="3-DEOXY-MANNO-OCTULOSONATE CYTIDYLYLTRANSFERASE, MITOCHONDRIAL"/>
    <property type="match status" value="1"/>
</dbReference>
<dbReference type="Pfam" id="PF02348">
    <property type="entry name" value="CTP_transf_3"/>
    <property type="match status" value="1"/>
</dbReference>
<dbReference type="SUPFAM" id="SSF53448">
    <property type="entry name" value="Nucleotide-diphospho-sugar transferases"/>
    <property type="match status" value="1"/>
</dbReference>
<reference key="1">
    <citation type="journal article" date="2008" name="BMC Genomics">
        <title>Acidithiobacillus ferrooxidans metabolism: from genome sequence to industrial applications.</title>
        <authorList>
            <person name="Valdes J."/>
            <person name="Pedroso I."/>
            <person name="Quatrini R."/>
            <person name="Dodson R.J."/>
            <person name="Tettelin H."/>
            <person name="Blake R. II"/>
            <person name="Eisen J.A."/>
            <person name="Holmes D.S."/>
        </authorList>
    </citation>
    <scope>NUCLEOTIDE SEQUENCE [LARGE SCALE GENOMIC DNA]</scope>
    <source>
        <strain>ATCC 23270 / DSM 14882 / CIP 104768 / NCIMB 8455</strain>
    </source>
</reference>
<comment type="function">
    <text evidence="1">Activates KDO (a required 8-carbon sugar) for incorporation into bacterial lipopolysaccharide in Gram-negative bacteria.</text>
</comment>
<comment type="catalytic activity">
    <reaction evidence="1">
        <text>3-deoxy-alpha-D-manno-oct-2-ulosonate + CTP = CMP-3-deoxy-beta-D-manno-octulosonate + diphosphate</text>
        <dbReference type="Rhea" id="RHEA:23448"/>
        <dbReference type="ChEBI" id="CHEBI:33019"/>
        <dbReference type="ChEBI" id="CHEBI:37563"/>
        <dbReference type="ChEBI" id="CHEBI:85986"/>
        <dbReference type="ChEBI" id="CHEBI:85987"/>
        <dbReference type="EC" id="2.7.7.38"/>
    </reaction>
</comment>
<comment type="pathway">
    <text evidence="1">Nucleotide-sugar biosynthesis; CMP-3-deoxy-D-manno-octulosonate biosynthesis; CMP-3-deoxy-D-manno-octulosonate from 3-deoxy-D-manno-octulosonate and CTP: step 1/1.</text>
</comment>
<comment type="pathway">
    <text evidence="1">Bacterial outer membrane biogenesis; lipopolysaccharide biosynthesis.</text>
</comment>
<comment type="subcellular location">
    <subcellularLocation>
        <location evidence="1">Cytoplasm</location>
    </subcellularLocation>
</comment>
<comment type="similarity">
    <text evidence="1">Belongs to the KdsB family.</text>
</comment>
<organism>
    <name type="scientific">Acidithiobacillus ferrooxidans (strain ATCC 23270 / DSM 14882 / CIP 104768 / NCIMB 8455)</name>
    <name type="common">Ferrobacillus ferrooxidans (strain ATCC 23270)</name>
    <dbReference type="NCBI Taxonomy" id="243159"/>
    <lineage>
        <taxon>Bacteria</taxon>
        <taxon>Pseudomonadati</taxon>
        <taxon>Pseudomonadota</taxon>
        <taxon>Acidithiobacillia</taxon>
        <taxon>Acidithiobacillales</taxon>
        <taxon>Acidithiobacillaceae</taxon>
        <taxon>Acidithiobacillus</taxon>
    </lineage>
</organism>
<keyword id="KW-0963">Cytoplasm</keyword>
<keyword id="KW-0448">Lipopolysaccharide biosynthesis</keyword>
<keyword id="KW-0548">Nucleotidyltransferase</keyword>
<keyword id="KW-1185">Reference proteome</keyword>
<keyword id="KW-0808">Transferase</keyword>
<feature type="chain" id="PRO_1000116883" description="3-deoxy-manno-octulosonate cytidylyltransferase">
    <location>
        <begin position="1"/>
        <end position="253"/>
    </location>
</feature>
<proteinExistence type="inferred from homology"/>